<keyword id="KW-0067">ATP-binding</keyword>
<keyword id="KW-0143">Chaperone</keyword>
<keyword id="KW-0547">Nucleotide-binding</keyword>
<keyword id="KW-0597">Phosphoprotein</keyword>
<keyword id="KW-0346">Stress response</keyword>
<reference key="1">
    <citation type="journal article" date="1998" name="Mol. Gen. Genet.">
        <title>Cloning and characterization of the dnaK heat shock operon of the marine bacterium Vibrio harveyi.</title>
        <authorList>
            <person name="Klein G."/>
            <person name="Zmijewski M."/>
            <person name="Krzewska J."/>
            <person name="Czeczatka M."/>
            <person name="Lipinska B."/>
        </authorList>
    </citation>
    <scope>NUCLEOTIDE SEQUENCE [GENOMIC DNA]</scope>
</reference>
<protein>
    <recommendedName>
        <fullName>Chaperone protein DnaK</fullName>
    </recommendedName>
    <alternativeName>
        <fullName>HSP70</fullName>
    </alternativeName>
    <alternativeName>
        <fullName>Heat shock 70 kDa protein</fullName>
    </alternativeName>
    <alternativeName>
        <fullName>Heat shock protein 70</fullName>
    </alternativeName>
</protein>
<gene>
    <name type="primary">dnaK</name>
</gene>
<sequence length="640" mass="69077">MGKIIGIDLGTTNSCVAVLDGDKPRVIENAEGERTTASVIAYTDGETLVGQPGGNVNAVTNPTRYTLFAIKRLIGRRFEDEEVQRDIEIMPYKIVKADNGDAWVEAKGQKMAAPQVSAEVLKKMKKTAEDFLGEEVTGAVITVPAYFNDAQAQATKDAGRIAGLEVKRIINEPTAAALAYGLDKSGGDRTIAVYDLGGGTFDISIIEIDEVEGEKTFEVLATNGDTHLGGEDFDNRLINYLVDEFNKEQGINLKNDPLAMQRVKEAAEKAKIELSSTSQTDVNLPYVTADATGPKHMNIKVTRAKLESLVEDLVQRSLEPLKVALADADLSVNDITDVILVGGQTRMPMVQAKVAEFFGKEARRDVNPDEAVAMGAAVQGGVLAGEVKDVLLLDVTPLSLGIETMGAVMTKLVEKNTTIPTKANQVFSTAEDNQSAVTIHVLQGERKQASFNKSLGQFNLEGIQAAPRGMPQIEVTFDLDADGILHVSAKDKQTGKEQKITIQASGGLSDDDIEKMVQEAEANKEADKKFEELATARNQADQMIHGTRKQVEEAGEALPAEEKEKIEAAISELETARKGDDKEAIDAKVQALMTAAQKLMEIAQQQAQAQQAQGGYAGAQQSQEDDVVDAEFEEVKDDKK</sequence>
<comment type="function">
    <text evidence="1">Acts as a chaperone.</text>
</comment>
<comment type="induction">
    <text evidence="1">By stress conditions e.g. heat shock (By similarity).</text>
</comment>
<comment type="similarity">
    <text evidence="3">Belongs to the heat shock protein 70 family.</text>
</comment>
<organism>
    <name type="scientific">Vibrio harveyi</name>
    <name type="common">Beneckea harveyi</name>
    <dbReference type="NCBI Taxonomy" id="669"/>
    <lineage>
        <taxon>Bacteria</taxon>
        <taxon>Pseudomonadati</taxon>
        <taxon>Pseudomonadota</taxon>
        <taxon>Gammaproteobacteria</taxon>
        <taxon>Vibrionales</taxon>
        <taxon>Vibrionaceae</taxon>
        <taxon>Vibrio</taxon>
    </lineage>
</organism>
<accession>O87384</accession>
<proteinExistence type="inferred from homology"/>
<dbReference type="EMBL" id="AY639008">
    <property type="protein sequence ID" value="AAT39536.1"/>
    <property type="molecule type" value="Genomic_DNA"/>
</dbReference>
<dbReference type="SMR" id="O87384"/>
<dbReference type="STRING" id="669.AL538_12730"/>
<dbReference type="GO" id="GO:0005524">
    <property type="term" value="F:ATP binding"/>
    <property type="evidence" value="ECO:0007669"/>
    <property type="project" value="UniProtKB-UniRule"/>
</dbReference>
<dbReference type="GO" id="GO:0140662">
    <property type="term" value="F:ATP-dependent protein folding chaperone"/>
    <property type="evidence" value="ECO:0007669"/>
    <property type="project" value="InterPro"/>
</dbReference>
<dbReference type="GO" id="GO:0051082">
    <property type="term" value="F:unfolded protein binding"/>
    <property type="evidence" value="ECO:0007669"/>
    <property type="project" value="InterPro"/>
</dbReference>
<dbReference type="CDD" id="cd10234">
    <property type="entry name" value="ASKHA_NBD_HSP70_DnaK-like"/>
    <property type="match status" value="1"/>
</dbReference>
<dbReference type="FunFam" id="2.60.34.10:FF:000014">
    <property type="entry name" value="Chaperone protein DnaK HSP70"/>
    <property type="match status" value="1"/>
</dbReference>
<dbReference type="FunFam" id="3.30.30.30:FF:000003">
    <property type="entry name" value="Heat shock protein 9"/>
    <property type="match status" value="1"/>
</dbReference>
<dbReference type="FunFam" id="1.20.1270.10:FF:000001">
    <property type="entry name" value="Molecular chaperone DnaK"/>
    <property type="match status" value="1"/>
</dbReference>
<dbReference type="FunFam" id="3.30.420.40:FF:000004">
    <property type="entry name" value="Molecular chaperone DnaK"/>
    <property type="match status" value="1"/>
</dbReference>
<dbReference type="FunFam" id="3.90.640.10:FF:000003">
    <property type="entry name" value="Molecular chaperone DnaK"/>
    <property type="match status" value="1"/>
</dbReference>
<dbReference type="Gene3D" id="1.20.1270.10">
    <property type="match status" value="1"/>
</dbReference>
<dbReference type="Gene3D" id="3.30.420.40">
    <property type="match status" value="2"/>
</dbReference>
<dbReference type="Gene3D" id="3.90.640.10">
    <property type="entry name" value="Actin, Chain A, domain 4"/>
    <property type="match status" value="1"/>
</dbReference>
<dbReference type="Gene3D" id="2.60.34.10">
    <property type="entry name" value="Substrate Binding Domain Of DNAk, Chain A, domain 1"/>
    <property type="match status" value="1"/>
</dbReference>
<dbReference type="HAMAP" id="MF_00332">
    <property type="entry name" value="DnaK"/>
    <property type="match status" value="1"/>
</dbReference>
<dbReference type="InterPro" id="IPR043129">
    <property type="entry name" value="ATPase_NBD"/>
</dbReference>
<dbReference type="InterPro" id="IPR012725">
    <property type="entry name" value="Chaperone_DnaK"/>
</dbReference>
<dbReference type="InterPro" id="IPR018181">
    <property type="entry name" value="Heat_shock_70_CS"/>
</dbReference>
<dbReference type="InterPro" id="IPR029048">
    <property type="entry name" value="HSP70_C_sf"/>
</dbReference>
<dbReference type="InterPro" id="IPR029047">
    <property type="entry name" value="HSP70_peptide-bd_sf"/>
</dbReference>
<dbReference type="InterPro" id="IPR013126">
    <property type="entry name" value="Hsp_70_fam"/>
</dbReference>
<dbReference type="NCBIfam" id="NF001413">
    <property type="entry name" value="PRK00290.1"/>
    <property type="match status" value="1"/>
</dbReference>
<dbReference type="NCBIfam" id="TIGR02350">
    <property type="entry name" value="prok_dnaK"/>
    <property type="match status" value="1"/>
</dbReference>
<dbReference type="PANTHER" id="PTHR19375">
    <property type="entry name" value="HEAT SHOCK PROTEIN 70KDA"/>
    <property type="match status" value="1"/>
</dbReference>
<dbReference type="Pfam" id="PF00012">
    <property type="entry name" value="HSP70"/>
    <property type="match status" value="1"/>
</dbReference>
<dbReference type="PRINTS" id="PR00301">
    <property type="entry name" value="HEATSHOCK70"/>
</dbReference>
<dbReference type="SUPFAM" id="SSF53067">
    <property type="entry name" value="Actin-like ATPase domain"/>
    <property type="match status" value="2"/>
</dbReference>
<dbReference type="SUPFAM" id="SSF100934">
    <property type="entry name" value="Heat shock protein 70kD (HSP70), C-terminal subdomain"/>
    <property type="match status" value="1"/>
</dbReference>
<dbReference type="SUPFAM" id="SSF100920">
    <property type="entry name" value="Heat shock protein 70kD (HSP70), peptide-binding domain"/>
    <property type="match status" value="1"/>
</dbReference>
<dbReference type="PROSITE" id="PS00297">
    <property type="entry name" value="HSP70_1"/>
    <property type="match status" value="1"/>
</dbReference>
<dbReference type="PROSITE" id="PS00329">
    <property type="entry name" value="HSP70_2"/>
    <property type="match status" value="1"/>
</dbReference>
<dbReference type="PROSITE" id="PS01036">
    <property type="entry name" value="HSP70_3"/>
    <property type="match status" value="1"/>
</dbReference>
<feature type="chain" id="PRO_0000078582" description="Chaperone protein DnaK">
    <location>
        <begin position="1"/>
        <end position="640"/>
    </location>
</feature>
<feature type="region of interest" description="Disordered" evidence="2">
    <location>
        <begin position="607"/>
        <end position="640"/>
    </location>
</feature>
<feature type="compositionally biased region" description="Low complexity" evidence="2">
    <location>
        <begin position="607"/>
        <end position="622"/>
    </location>
</feature>
<feature type="compositionally biased region" description="Acidic residues" evidence="2">
    <location>
        <begin position="623"/>
        <end position="640"/>
    </location>
</feature>
<feature type="modified residue" description="Phosphothreonine; by autocatalysis" evidence="1">
    <location>
        <position position="200"/>
    </location>
</feature>
<evidence type="ECO:0000250" key="1"/>
<evidence type="ECO:0000256" key="2">
    <source>
        <dbReference type="SAM" id="MobiDB-lite"/>
    </source>
</evidence>
<evidence type="ECO:0000305" key="3"/>
<name>DNAK_VIBHA</name>